<accession>Q2RI40</accession>
<sequence>MSTKDLFAEPNLKQITVWARGVVMNKDARDIVVALTEAAAKEGKYVQAWENYVDLPDRIYVPVRAYARISSDPIESKYIYENETPDIVVLVEESLIKGVPILKGIRPGSTLVVNTKRSIDTILEFLGDTGNLAQIVTVDANSMAEAVMTLSGAEGATDATGIGAGIAAPIAGAVVKATGIVDVENLAAVVKNPAAMRRGYAEAQVRQLPPHEAVEEAAVSATELLRQMPFAGTVPSPVTENEGMVTGNWRIQRPIIDREACTECYTCWIYCPDSCITRTEEGPVFNMKYCKGCGLCTAVCPSGALTNVPELDFKD</sequence>
<reference key="1">
    <citation type="journal article" date="2008" name="Environ. Microbiol.">
        <title>The complete genome sequence of Moorella thermoacetica (f. Clostridium thermoaceticum).</title>
        <authorList>
            <person name="Pierce E."/>
            <person name="Xie G."/>
            <person name="Barabote R.D."/>
            <person name="Saunders E."/>
            <person name="Han C.S."/>
            <person name="Detter J.C."/>
            <person name="Richardson P."/>
            <person name="Brettin T.S."/>
            <person name="Das A."/>
            <person name="Ljungdahl L.G."/>
            <person name="Ragsdale S.W."/>
        </authorList>
    </citation>
    <scope>NUCLEOTIDE SEQUENCE [LARGE SCALE GENOMIC DNA]</scope>
    <source>
        <strain>ATCC 39073 / JCM 9320</strain>
    </source>
</reference>
<reference key="2">
    <citation type="journal article" date="2010" name="J. Biol. Chem.">
        <title>Identification and characterization of oxalate oxidoreductase, a novel thiamine pyrophosphate-dependent 2-oxoacid oxidoreductase that enables anaerobic growth on oxalate.</title>
        <authorList>
            <person name="Pierce E."/>
            <person name="Becker D.F."/>
            <person name="Ragsdale S.W."/>
        </authorList>
    </citation>
    <scope>IDENTIFICATION BY MASS SPECTROMETRY</scope>
    <scope>FUNCTION</scope>
    <scope>CATALYTIC ACTIVITY</scope>
    <scope>COFACTOR</scope>
    <scope>BIOPHYSICOCHEMICAL PROPERTIES</scope>
    <scope>SUBUNIT</scope>
</reference>
<proteinExistence type="evidence at protein level"/>
<feature type="chain" id="PRO_0000430799" description="Oxalate oxidoreductase subunit delta">
    <location>
        <begin position="1"/>
        <end position="315"/>
    </location>
</feature>
<feature type="domain" description="4Fe-4S ferredoxin-type 1" evidence="2">
    <location>
        <begin position="252"/>
        <end position="280"/>
    </location>
</feature>
<feature type="domain" description="4Fe-4S ferredoxin-type 2" evidence="2">
    <location>
        <begin position="281"/>
        <end position="310"/>
    </location>
</feature>
<feature type="binding site" evidence="1">
    <location>
        <position position="261"/>
    </location>
    <ligand>
        <name>[4Fe-4S] cluster</name>
        <dbReference type="ChEBI" id="CHEBI:49883"/>
        <label>1</label>
    </ligand>
</feature>
<feature type="binding site" evidence="1">
    <location>
        <position position="264"/>
    </location>
    <ligand>
        <name>[4Fe-4S] cluster</name>
        <dbReference type="ChEBI" id="CHEBI:49883"/>
        <label>1</label>
    </ligand>
</feature>
<feature type="binding site" evidence="1">
    <location>
        <position position="267"/>
    </location>
    <ligand>
        <name>[4Fe-4S] cluster</name>
        <dbReference type="ChEBI" id="CHEBI:49883"/>
        <label>1</label>
    </ligand>
</feature>
<feature type="binding site" evidence="1">
    <location>
        <position position="271"/>
    </location>
    <ligand>
        <name>[4Fe-4S] cluster</name>
        <dbReference type="ChEBI" id="CHEBI:49883"/>
        <label>2</label>
    </ligand>
</feature>
<feature type="binding site" evidence="1">
    <location>
        <position position="290"/>
    </location>
    <ligand>
        <name>[4Fe-4S] cluster</name>
        <dbReference type="ChEBI" id="CHEBI:49883"/>
        <label>2</label>
    </ligand>
</feature>
<feature type="binding site" evidence="1">
    <location>
        <position position="293"/>
    </location>
    <ligand>
        <name>[4Fe-4S] cluster</name>
        <dbReference type="ChEBI" id="CHEBI:49883"/>
        <label>2</label>
    </ligand>
</feature>
<feature type="binding site" evidence="1">
    <location>
        <position position="296"/>
    </location>
    <ligand>
        <name>[4Fe-4S] cluster</name>
        <dbReference type="ChEBI" id="CHEBI:49883"/>
        <label>2</label>
    </ligand>
</feature>
<feature type="binding site" evidence="1">
    <location>
        <position position="300"/>
    </location>
    <ligand>
        <name>[4Fe-4S] cluster</name>
        <dbReference type="ChEBI" id="CHEBI:49883"/>
        <label>1</label>
    </ligand>
</feature>
<feature type="turn" evidence="7">
    <location>
        <begin position="4"/>
        <end position="7"/>
    </location>
</feature>
<feature type="strand" evidence="7">
    <location>
        <begin position="13"/>
        <end position="20"/>
    </location>
</feature>
<feature type="turn" evidence="7">
    <location>
        <begin position="21"/>
        <end position="23"/>
    </location>
</feature>
<feature type="helix" evidence="7">
    <location>
        <begin position="25"/>
        <end position="40"/>
    </location>
</feature>
<feature type="turn" evidence="7">
    <location>
        <begin position="41"/>
        <end position="43"/>
    </location>
</feature>
<feature type="strand" evidence="7">
    <location>
        <begin position="45"/>
        <end position="50"/>
    </location>
</feature>
<feature type="helix" evidence="6">
    <location>
        <begin position="52"/>
        <end position="54"/>
    </location>
</feature>
<feature type="strand" evidence="7">
    <location>
        <begin position="61"/>
        <end position="72"/>
    </location>
</feature>
<feature type="strand" evidence="7">
    <location>
        <begin position="86"/>
        <end position="92"/>
    </location>
</feature>
<feature type="helix" evidence="7">
    <location>
        <begin position="93"/>
        <end position="96"/>
    </location>
</feature>
<feature type="strand" evidence="7">
    <location>
        <begin position="97"/>
        <end position="99"/>
    </location>
</feature>
<feature type="turn" evidence="7">
    <location>
        <begin position="101"/>
        <end position="104"/>
    </location>
</feature>
<feature type="strand" evidence="7">
    <location>
        <begin position="109"/>
        <end position="114"/>
    </location>
</feature>
<feature type="helix" evidence="7">
    <location>
        <begin position="119"/>
        <end position="126"/>
    </location>
</feature>
<feature type="strand" evidence="7">
    <location>
        <begin position="132"/>
        <end position="138"/>
    </location>
</feature>
<feature type="helix" evidence="7">
    <location>
        <begin position="140"/>
        <end position="143"/>
    </location>
</feature>
<feature type="strand" evidence="6">
    <location>
        <begin position="150"/>
        <end position="152"/>
    </location>
</feature>
<feature type="strand" evidence="7">
    <location>
        <begin position="162"/>
        <end position="165"/>
    </location>
</feature>
<feature type="helix" evidence="7">
    <location>
        <begin position="167"/>
        <end position="178"/>
    </location>
</feature>
<feature type="helix" evidence="7">
    <location>
        <begin position="183"/>
        <end position="189"/>
    </location>
</feature>
<feature type="helix" evidence="7">
    <location>
        <begin position="193"/>
        <end position="201"/>
    </location>
</feature>
<feature type="strand" evidence="7">
    <location>
        <begin position="204"/>
        <end position="207"/>
    </location>
</feature>
<feature type="helix" evidence="7">
    <location>
        <begin position="221"/>
        <end position="227"/>
    </location>
</feature>
<feature type="helix" evidence="7">
    <location>
        <begin position="230"/>
        <end position="232"/>
    </location>
</feature>
<feature type="helix" evidence="7">
    <location>
        <begin position="247"/>
        <end position="249"/>
    </location>
</feature>
<feature type="strand" evidence="7">
    <location>
        <begin position="251"/>
        <end position="256"/>
    </location>
</feature>
<feature type="turn" evidence="7">
    <location>
        <begin position="258"/>
        <end position="260"/>
    </location>
</feature>
<feature type="helix" evidence="7">
    <location>
        <begin position="266"/>
        <end position="270"/>
    </location>
</feature>
<feature type="strand" evidence="7">
    <location>
        <begin position="276"/>
        <end position="279"/>
    </location>
</feature>
<feature type="strand" evidence="7">
    <location>
        <begin position="282"/>
        <end position="285"/>
    </location>
</feature>
<feature type="turn" evidence="7">
    <location>
        <begin position="287"/>
        <end position="289"/>
    </location>
</feature>
<feature type="helix" evidence="7">
    <location>
        <begin position="295"/>
        <end position="299"/>
    </location>
</feature>
<feature type="strand" evidence="7">
    <location>
        <begin position="301"/>
        <end position="303"/>
    </location>
</feature>
<feature type="strand" evidence="7">
    <location>
        <begin position="305"/>
        <end position="309"/>
    </location>
</feature>
<feature type="helix" evidence="7">
    <location>
        <begin position="310"/>
        <end position="312"/>
    </location>
</feature>
<keyword id="KW-0002">3D-structure</keyword>
<keyword id="KW-0004">4Fe-4S</keyword>
<keyword id="KW-0408">Iron</keyword>
<keyword id="KW-0411">Iron-sulfur</keyword>
<keyword id="KW-0479">Metal-binding</keyword>
<keyword id="KW-0560">Oxidoreductase</keyword>
<keyword id="KW-0677">Repeat</keyword>
<evidence type="ECO:0000250" key="1">
    <source>
        <dbReference type="UniProtKB" id="P94692"/>
    </source>
</evidence>
<evidence type="ECO:0000255" key="2">
    <source>
        <dbReference type="PROSITE-ProRule" id="PRU00711"/>
    </source>
</evidence>
<evidence type="ECO:0000269" key="3">
    <source>
    </source>
</evidence>
<evidence type="ECO:0000303" key="4">
    <source>
    </source>
</evidence>
<evidence type="ECO:0000312" key="5">
    <source>
        <dbReference type="EMBL" id="ABC19899.1"/>
    </source>
</evidence>
<evidence type="ECO:0007829" key="6">
    <source>
        <dbReference type="PDB" id="5C4I"/>
    </source>
</evidence>
<evidence type="ECO:0007829" key="7">
    <source>
        <dbReference type="PDB" id="5EXE"/>
    </source>
</evidence>
<organism>
    <name type="scientific">Moorella thermoacetica (strain ATCC 39073 / JCM 9320)</name>
    <dbReference type="NCBI Taxonomy" id="264732"/>
    <lineage>
        <taxon>Bacteria</taxon>
        <taxon>Bacillati</taxon>
        <taxon>Bacillota</taxon>
        <taxon>Clostridia</taxon>
        <taxon>Moorellales</taxon>
        <taxon>Moorellaceae</taxon>
        <taxon>Moorella</taxon>
    </lineage>
</organism>
<comment type="function">
    <text evidence="3">Catalyzes the anaerobic oxidation of oxalate using a broad range of electron acceptors, including ferredoxin and the nickel-dependent carbon monoxide dehydrogenase. Does not require coenzyme A as cosubstrate. Enables anaerobic growth on oxalate which is used as energy source by the bacteria.</text>
</comment>
<comment type="catalytic activity">
    <reaction evidence="3">
        <text>oxidized 2[4Fe-4S]-[ferredoxin] + oxalate = reduced 2[4Fe-4S]-[ferredoxin] + 2 CO2</text>
        <dbReference type="Rhea" id="RHEA:30179"/>
        <dbReference type="Rhea" id="RHEA-COMP:10002"/>
        <dbReference type="Rhea" id="RHEA-COMP:10004"/>
        <dbReference type="ChEBI" id="CHEBI:16526"/>
        <dbReference type="ChEBI" id="CHEBI:30623"/>
        <dbReference type="ChEBI" id="CHEBI:33722"/>
        <dbReference type="ChEBI" id="CHEBI:33723"/>
        <dbReference type="EC" id="1.2.7.10"/>
    </reaction>
</comment>
<comment type="cofactor">
    <cofactor evidence="3">
        <name>[4Fe-4S] cluster</name>
        <dbReference type="ChEBI" id="CHEBI:49883"/>
    </cofactor>
    <text evidence="3">Binds 2 [4Fe-4S] clusters per subunit.</text>
</comment>
<comment type="biophysicochemical properties">
    <kinetics>
        <KM evidence="3">58 uM for oxalate</KM>
        <text evidence="3">Kinetic parameters determined with the heterodimer oxalate oxidoreductase complex.</text>
    </kinetics>
    <phDependence>
        <text evidence="3">Optimum pH is 8.7.</text>
    </phDependence>
</comment>
<comment type="subunit">
    <text evidence="3">Dimer of heterotrimer of one alpha, one beta and one delta subunit.</text>
</comment>
<dbReference type="EC" id="1.2.7.10" evidence="3"/>
<dbReference type="EMBL" id="CP000232">
    <property type="protein sequence ID" value="ABC19899.1"/>
    <property type="molecule type" value="Genomic_DNA"/>
</dbReference>
<dbReference type="RefSeq" id="YP_430442.1">
    <property type="nucleotide sequence ID" value="NC_007644.1"/>
</dbReference>
<dbReference type="PDB" id="5C4I">
    <property type="method" value="X-ray"/>
    <property type="resolution" value="2.27 A"/>
    <property type="chains" value="B/E=1-315"/>
</dbReference>
<dbReference type="PDB" id="5EXD">
    <property type="method" value="X-ray"/>
    <property type="resolution" value="2.50 A"/>
    <property type="chains" value="B/E/H/K=1-315"/>
</dbReference>
<dbReference type="PDB" id="5EXE">
    <property type="method" value="X-ray"/>
    <property type="resolution" value="1.88 A"/>
    <property type="chains" value="B/E=1-315"/>
</dbReference>
<dbReference type="PDBsum" id="5C4I"/>
<dbReference type="PDBsum" id="5EXD"/>
<dbReference type="PDBsum" id="5EXE"/>
<dbReference type="SMR" id="Q2RI40"/>
<dbReference type="STRING" id="264732.Moth_1593"/>
<dbReference type="EnsemblBacteria" id="ABC19899">
    <property type="protein sequence ID" value="ABC19899"/>
    <property type="gene ID" value="Moth_1593"/>
</dbReference>
<dbReference type="KEGG" id="mta:Moth_1593"/>
<dbReference type="PATRIC" id="fig|264732.11.peg.1723"/>
<dbReference type="eggNOG" id="COG1014">
    <property type="taxonomic scope" value="Bacteria"/>
</dbReference>
<dbReference type="eggNOG" id="COG1144">
    <property type="taxonomic scope" value="Bacteria"/>
</dbReference>
<dbReference type="HOGENOM" id="CLU_060916_0_0_9"/>
<dbReference type="OrthoDB" id="9794954at2"/>
<dbReference type="BioCyc" id="MetaCyc:MONOMER-16173"/>
<dbReference type="EvolutionaryTrace" id="Q2RI40"/>
<dbReference type="GO" id="GO:0051539">
    <property type="term" value="F:4 iron, 4 sulfur cluster binding"/>
    <property type="evidence" value="ECO:0000314"/>
    <property type="project" value="UniProtKB"/>
</dbReference>
<dbReference type="GO" id="GO:0046872">
    <property type="term" value="F:metal ion binding"/>
    <property type="evidence" value="ECO:0007669"/>
    <property type="project" value="UniProtKB-KW"/>
</dbReference>
<dbReference type="GO" id="GO:0016625">
    <property type="term" value="F:oxidoreductase activity, acting on the aldehyde or oxo group of donors, iron-sulfur protein as acceptor"/>
    <property type="evidence" value="ECO:0000314"/>
    <property type="project" value="UniProtKB"/>
</dbReference>
<dbReference type="GO" id="GO:0033611">
    <property type="term" value="P:oxalate catabolic process"/>
    <property type="evidence" value="ECO:0000314"/>
    <property type="project" value="UniProtKB"/>
</dbReference>
<dbReference type="Gene3D" id="3.30.70.20">
    <property type="match status" value="1"/>
</dbReference>
<dbReference type="Gene3D" id="3.40.920.10">
    <property type="entry name" value="Pyruvate-ferredoxin oxidoreductase, PFOR, domain III"/>
    <property type="match status" value="1"/>
</dbReference>
<dbReference type="InterPro" id="IPR017896">
    <property type="entry name" value="4Fe4S_Fe-S-bd"/>
</dbReference>
<dbReference type="InterPro" id="IPR017900">
    <property type="entry name" value="4Fe4S_Fe_S_CS"/>
</dbReference>
<dbReference type="InterPro" id="IPR054933">
    <property type="entry name" value="OxalOxred_delta"/>
</dbReference>
<dbReference type="InterPro" id="IPR011898">
    <property type="entry name" value="PorD_KorD"/>
</dbReference>
<dbReference type="InterPro" id="IPR019752">
    <property type="entry name" value="Pyrv/ketoisovalerate_OxRed_cat"/>
</dbReference>
<dbReference type="InterPro" id="IPR002869">
    <property type="entry name" value="Pyrv_flavodox_OxRed_cen"/>
</dbReference>
<dbReference type="NCBIfam" id="NF045790">
    <property type="entry name" value="OxalOxreddelta"/>
    <property type="match status" value="1"/>
</dbReference>
<dbReference type="NCBIfam" id="TIGR02179">
    <property type="entry name" value="PorD_KorD"/>
    <property type="match status" value="1"/>
</dbReference>
<dbReference type="PANTHER" id="PTHR43724">
    <property type="entry name" value="PYRUVATE SYNTHASE SUBUNIT PORD"/>
    <property type="match status" value="1"/>
</dbReference>
<dbReference type="PANTHER" id="PTHR43724:SF1">
    <property type="entry name" value="PYRUVATE SYNTHASE SUBUNIT PORD"/>
    <property type="match status" value="1"/>
</dbReference>
<dbReference type="Pfam" id="PF00037">
    <property type="entry name" value="Fer4"/>
    <property type="match status" value="1"/>
</dbReference>
<dbReference type="Pfam" id="PF01558">
    <property type="entry name" value="POR"/>
    <property type="match status" value="1"/>
</dbReference>
<dbReference type="SUPFAM" id="SSF54862">
    <property type="entry name" value="4Fe-4S ferredoxins"/>
    <property type="match status" value="1"/>
</dbReference>
<dbReference type="SUPFAM" id="SSF53323">
    <property type="entry name" value="Pyruvate-ferredoxin oxidoreductase, PFOR, domain III"/>
    <property type="match status" value="1"/>
</dbReference>
<dbReference type="PROSITE" id="PS00198">
    <property type="entry name" value="4FE4S_FER_1"/>
    <property type="match status" value="2"/>
</dbReference>
<dbReference type="PROSITE" id="PS51379">
    <property type="entry name" value="4FE4S_FER_2"/>
    <property type="match status" value="2"/>
</dbReference>
<name>OORD_MOOTA</name>
<gene>
    <name evidence="5" type="ordered locus">Moth_1593</name>
</gene>
<protein>
    <recommendedName>
        <fullName evidence="4">Oxalate oxidoreductase subunit delta</fullName>
        <shortName evidence="4">OOR delta subunit</shortName>
        <ecNumber evidence="3">1.2.7.10</ecNumber>
    </recommendedName>
</protein>